<sequence length="89" mass="10608">MAISQERKNEIIKEYRVHETDTGSPEVQIAVLTAEINAVNEHLRTHKKDHHSRRGLLKMVGRRRHLLNYLRSKDIQRYRELIKSLGIRR</sequence>
<keyword id="KW-0002">3D-structure</keyword>
<keyword id="KW-0687">Ribonucleoprotein</keyword>
<keyword id="KW-0689">Ribosomal protein</keyword>
<keyword id="KW-0694">RNA-binding</keyword>
<keyword id="KW-0699">rRNA-binding</keyword>
<proteinExistence type="evidence at protein level"/>
<protein>
    <recommendedName>
        <fullName evidence="1">Small ribosomal subunit protein uS15</fullName>
    </recommendedName>
    <alternativeName>
        <fullName evidence="2">30S ribosomal protein S15</fullName>
    </alternativeName>
</protein>
<gene>
    <name evidence="1" type="primary">rpsO</name>
    <name type="ordered locus">MW1156</name>
</gene>
<dbReference type="EMBL" id="BA000033">
    <property type="protein sequence ID" value="BAB95021.1"/>
    <property type="molecule type" value="Genomic_DNA"/>
</dbReference>
<dbReference type="RefSeq" id="WP_001018328.1">
    <property type="nucleotide sequence ID" value="NC_003923.1"/>
</dbReference>
<dbReference type="PDB" id="8Y38">
    <property type="method" value="EM"/>
    <property type="resolution" value="2.58 A"/>
    <property type="chains" value="o=1-89"/>
</dbReference>
<dbReference type="PDB" id="8Y39">
    <property type="method" value="EM"/>
    <property type="resolution" value="3.60 A"/>
    <property type="chains" value="o=1-89"/>
</dbReference>
<dbReference type="PDBsum" id="8Y38"/>
<dbReference type="PDBsum" id="8Y39"/>
<dbReference type="EMDB" id="EMD-38875"/>
<dbReference type="EMDB" id="EMD-38876"/>
<dbReference type="SMR" id="Q7A116"/>
<dbReference type="KEGG" id="sam:MW1156"/>
<dbReference type="HOGENOM" id="CLU_148518_0_0_9"/>
<dbReference type="GO" id="GO:0022627">
    <property type="term" value="C:cytosolic small ribosomal subunit"/>
    <property type="evidence" value="ECO:0007669"/>
    <property type="project" value="TreeGrafter"/>
</dbReference>
<dbReference type="GO" id="GO:0019843">
    <property type="term" value="F:rRNA binding"/>
    <property type="evidence" value="ECO:0007669"/>
    <property type="project" value="UniProtKB-UniRule"/>
</dbReference>
<dbReference type="GO" id="GO:0003735">
    <property type="term" value="F:structural constituent of ribosome"/>
    <property type="evidence" value="ECO:0007669"/>
    <property type="project" value="InterPro"/>
</dbReference>
<dbReference type="GO" id="GO:0006412">
    <property type="term" value="P:translation"/>
    <property type="evidence" value="ECO:0007669"/>
    <property type="project" value="UniProtKB-UniRule"/>
</dbReference>
<dbReference type="CDD" id="cd00353">
    <property type="entry name" value="Ribosomal_S15p_S13e"/>
    <property type="match status" value="1"/>
</dbReference>
<dbReference type="FunFam" id="1.10.287.10:FF:000002">
    <property type="entry name" value="30S ribosomal protein S15"/>
    <property type="match status" value="1"/>
</dbReference>
<dbReference type="Gene3D" id="6.10.250.3130">
    <property type="match status" value="1"/>
</dbReference>
<dbReference type="Gene3D" id="1.10.287.10">
    <property type="entry name" value="S15/NS1, RNA-binding"/>
    <property type="match status" value="1"/>
</dbReference>
<dbReference type="HAMAP" id="MF_01343_B">
    <property type="entry name" value="Ribosomal_uS15_B"/>
    <property type="match status" value="1"/>
</dbReference>
<dbReference type="InterPro" id="IPR000589">
    <property type="entry name" value="Ribosomal_uS15"/>
</dbReference>
<dbReference type="InterPro" id="IPR005290">
    <property type="entry name" value="Ribosomal_uS15_bac-type"/>
</dbReference>
<dbReference type="InterPro" id="IPR009068">
    <property type="entry name" value="uS15_NS1_RNA-bd_sf"/>
</dbReference>
<dbReference type="NCBIfam" id="TIGR00952">
    <property type="entry name" value="S15_bact"/>
    <property type="match status" value="1"/>
</dbReference>
<dbReference type="PANTHER" id="PTHR23321">
    <property type="entry name" value="RIBOSOMAL PROTEIN S15, BACTERIAL AND ORGANELLAR"/>
    <property type="match status" value="1"/>
</dbReference>
<dbReference type="PANTHER" id="PTHR23321:SF26">
    <property type="entry name" value="SMALL RIBOSOMAL SUBUNIT PROTEIN US15M"/>
    <property type="match status" value="1"/>
</dbReference>
<dbReference type="Pfam" id="PF00312">
    <property type="entry name" value="Ribosomal_S15"/>
    <property type="match status" value="1"/>
</dbReference>
<dbReference type="SMART" id="SM01387">
    <property type="entry name" value="Ribosomal_S15"/>
    <property type="match status" value="1"/>
</dbReference>
<dbReference type="SUPFAM" id="SSF47060">
    <property type="entry name" value="S15/NS1 RNA-binding domain"/>
    <property type="match status" value="1"/>
</dbReference>
<dbReference type="PROSITE" id="PS00362">
    <property type="entry name" value="RIBOSOMAL_S15"/>
    <property type="match status" value="1"/>
</dbReference>
<evidence type="ECO:0000255" key="1">
    <source>
        <dbReference type="HAMAP-Rule" id="MF_01343"/>
    </source>
</evidence>
<evidence type="ECO:0000305" key="2"/>
<name>RS15_STAAW</name>
<reference key="1">
    <citation type="journal article" date="2002" name="Lancet">
        <title>Genome and virulence determinants of high virulence community-acquired MRSA.</title>
        <authorList>
            <person name="Baba T."/>
            <person name="Takeuchi F."/>
            <person name="Kuroda M."/>
            <person name="Yuzawa H."/>
            <person name="Aoki K."/>
            <person name="Oguchi A."/>
            <person name="Nagai Y."/>
            <person name="Iwama N."/>
            <person name="Asano K."/>
            <person name="Naimi T."/>
            <person name="Kuroda H."/>
            <person name="Cui L."/>
            <person name="Yamamoto K."/>
            <person name="Hiramatsu K."/>
        </authorList>
    </citation>
    <scope>NUCLEOTIDE SEQUENCE [LARGE SCALE GENOMIC DNA]</scope>
    <source>
        <strain>MW2</strain>
    </source>
</reference>
<feature type="chain" id="PRO_0000115543" description="Small ribosomal subunit protein uS15">
    <location>
        <begin position="1"/>
        <end position="89"/>
    </location>
</feature>
<organism>
    <name type="scientific">Staphylococcus aureus (strain MW2)</name>
    <dbReference type="NCBI Taxonomy" id="196620"/>
    <lineage>
        <taxon>Bacteria</taxon>
        <taxon>Bacillati</taxon>
        <taxon>Bacillota</taxon>
        <taxon>Bacilli</taxon>
        <taxon>Bacillales</taxon>
        <taxon>Staphylococcaceae</taxon>
        <taxon>Staphylococcus</taxon>
    </lineage>
</organism>
<comment type="function">
    <text evidence="1">One of the primary rRNA binding proteins, it binds directly to 16S rRNA where it helps nucleate assembly of the platform of the 30S subunit by binding and bridging several RNA helices of the 16S rRNA.</text>
</comment>
<comment type="function">
    <text evidence="1">Forms an intersubunit bridge (bridge B4) with the 23S rRNA of the 50S subunit in the ribosome.</text>
</comment>
<comment type="subunit">
    <text evidence="1">Part of the 30S ribosomal subunit. Forms a bridge to the 50S subunit in the 70S ribosome, contacting the 23S rRNA.</text>
</comment>
<comment type="similarity">
    <text evidence="1">Belongs to the universal ribosomal protein uS15 family.</text>
</comment>
<accession>Q7A116</accession>